<dbReference type="GO" id="GO:0005576">
    <property type="term" value="C:extracellular region"/>
    <property type="evidence" value="ECO:0000303"/>
    <property type="project" value="UniProtKB"/>
</dbReference>
<dbReference type="GO" id="GO:0005184">
    <property type="term" value="F:neuropeptide hormone activity"/>
    <property type="evidence" value="ECO:0000303"/>
    <property type="project" value="UniProtKB"/>
</dbReference>
<dbReference type="GO" id="GO:0007218">
    <property type="term" value="P:neuropeptide signaling pathway"/>
    <property type="evidence" value="ECO:0000303"/>
    <property type="project" value="UniProtKB"/>
</dbReference>
<reference key="1">
    <citation type="journal article" date="2002" name="Proc. Natl. Acad. Sci. U.S.A.">
        <title>Identification of a potent antidiuretic factor acting on beetle Malpighian tubules.</title>
        <authorList>
            <person name="Eigenheer R.A."/>
            <person name="Nicolson S.W."/>
            <person name="Schegg K.M."/>
            <person name="Hull J.J."/>
            <person name="Schooley D.A."/>
        </authorList>
    </citation>
    <scope>PROTEIN SEQUENCE</scope>
    <scope>FUNCTION</scope>
    <scope>TISSUE SPECIFICITY</scope>
    <scope>MASS SPECTROMETRY</scope>
    <source>
        <tissue>Head</tissue>
    </source>
</reference>
<reference key="2">
    <citation type="journal article" date="2002" name="J. Exp. Biol.">
        <title>Antagonistic control of fluid secretion by the Malpighian tubules of Tenebrio molitor: effects of diuretic and antidiuretic peptides and their second messengers.</title>
        <authorList>
            <person name="Wiehart U.I.M."/>
            <person name="Nicolson S.W."/>
            <person name="Eigenheer R.A."/>
            <person name="Schooley D.A."/>
        </authorList>
    </citation>
    <scope>FUNCTION</scope>
</reference>
<reference key="3">
    <citation type="journal article" date="2004" name="J. Exp. Biol.">
        <title>The mechanism of action of the antidiuretic peptide Tenmo ADFa in Malpighian tubules of Aedes aegypti.</title>
        <authorList>
            <person name="Massaro R.C."/>
            <person name="Lee L.W."/>
            <person name="Patel A.B."/>
            <person name="Wu D.S."/>
            <person name="Yu M.-J."/>
            <person name="Scott B.N."/>
            <person name="Schooley D.A."/>
            <person name="Schegg K.M."/>
            <person name="Beyenbach K.W."/>
        </authorList>
    </citation>
    <scope>FUNCTION</scope>
</reference>
<feature type="peptide" id="PRO_0000044103" description="Antidiuretic factor A">
    <location>
        <begin position="1"/>
        <end position="14"/>
    </location>
</feature>
<keyword id="KW-0903">Direct protein sequencing</keyword>
<keyword id="KW-0372">Hormone</keyword>
<keyword id="KW-0527">Neuropeptide</keyword>
<keyword id="KW-0964">Secreted</keyword>
<comment type="function">
    <text evidence="1 2 3">Strong inhibitor of fluid secretion by the Malpighian tubules. Uses cGMP as a second messenger and inhibits fluid production by decreasing cAMP concentration. Reduces isosmotic fluid secretion by inhibiting electroneutral and non-conductive transport pathways. Reverses the stimulatory effect of diuretic hormone I.</text>
</comment>
<comment type="subcellular location">
    <subcellularLocation>
        <location>Secreted</location>
    </subcellularLocation>
</comment>
<comment type="mass spectrometry"/>
<comment type="similarity">
    <text evidence="4">To T.molitor cuticular protein LPCP29 C-terminal region.</text>
</comment>
<protein>
    <recommendedName>
        <fullName>Antidiuretic factor A</fullName>
        <shortName>ADF</shortName>
        <shortName>ADFa</shortName>
    </recommendedName>
    <alternativeName>
        <fullName>Antidiuretic hormone A</fullName>
        <shortName>ADHA</shortName>
    </alternativeName>
</protein>
<name>ADFA_TENMO</name>
<organism>
    <name type="scientific">Tenebrio molitor</name>
    <name type="common">Yellow mealworm beetle</name>
    <dbReference type="NCBI Taxonomy" id="7067"/>
    <lineage>
        <taxon>Eukaryota</taxon>
        <taxon>Metazoa</taxon>
        <taxon>Ecdysozoa</taxon>
        <taxon>Arthropoda</taxon>
        <taxon>Hexapoda</taxon>
        <taxon>Insecta</taxon>
        <taxon>Pterygota</taxon>
        <taxon>Neoptera</taxon>
        <taxon>Endopterygota</taxon>
        <taxon>Coleoptera</taxon>
        <taxon>Polyphaga</taxon>
        <taxon>Cucujiformia</taxon>
        <taxon>Tenebrionidae</taxon>
        <taxon>Tenebrio</taxon>
    </lineage>
</organism>
<sequence>VVNTPGHAVSYHVY</sequence>
<evidence type="ECO:0000269" key="1">
    <source>
    </source>
</evidence>
<evidence type="ECO:0000269" key="2">
    <source>
    </source>
</evidence>
<evidence type="ECO:0000269" key="3">
    <source>
    </source>
</evidence>
<evidence type="ECO:0000305" key="4"/>
<accession>P82965</accession>
<proteinExistence type="evidence at protein level"/>